<proteinExistence type="inferred from homology"/>
<gene>
    <name evidence="1" type="primary">NP</name>
</gene>
<dbReference type="EMBL" id="L07351">
    <property type="protein sequence ID" value="AAA51504.1"/>
    <property type="molecule type" value="Genomic_RNA"/>
</dbReference>
<dbReference type="EMBL" id="CY006710">
    <property type="protein sequence ID" value="ABB96345.1"/>
    <property type="molecule type" value="Genomic_RNA"/>
</dbReference>
<dbReference type="SMR" id="Q08035"/>
<dbReference type="PRO" id="PR:Q08035"/>
<dbReference type="Proteomes" id="UP000008574">
    <property type="component" value="Genome"/>
</dbReference>
<dbReference type="GO" id="GO:0019029">
    <property type="term" value="C:helical viral capsid"/>
    <property type="evidence" value="ECO:0007669"/>
    <property type="project" value="UniProtKB-UniRule"/>
</dbReference>
<dbReference type="GO" id="GO:0043657">
    <property type="term" value="C:host cell"/>
    <property type="evidence" value="ECO:0007669"/>
    <property type="project" value="GOC"/>
</dbReference>
<dbReference type="GO" id="GO:0042025">
    <property type="term" value="C:host cell nucleus"/>
    <property type="evidence" value="ECO:0007669"/>
    <property type="project" value="UniProtKB-SubCell"/>
</dbReference>
<dbReference type="GO" id="GO:1990904">
    <property type="term" value="C:ribonucleoprotein complex"/>
    <property type="evidence" value="ECO:0007669"/>
    <property type="project" value="UniProtKB-KW"/>
</dbReference>
<dbReference type="GO" id="GO:0019013">
    <property type="term" value="C:viral nucleocapsid"/>
    <property type="evidence" value="ECO:0007669"/>
    <property type="project" value="UniProtKB-UniRule"/>
</dbReference>
<dbReference type="GO" id="GO:0003723">
    <property type="term" value="F:RNA binding"/>
    <property type="evidence" value="ECO:0007669"/>
    <property type="project" value="UniProtKB-UniRule"/>
</dbReference>
<dbReference type="GO" id="GO:0005198">
    <property type="term" value="F:structural molecule activity"/>
    <property type="evidence" value="ECO:0007669"/>
    <property type="project" value="UniProtKB-UniRule"/>
</dbReference>
<dbReference type="GO" id="GO:0046718">
    <property type="term" value="P:symbiont entry into host cell"/>
    <property type="evidence" value="ECO:0007669"/>
    <property type="project" value="UniProtKB-KW"/>
</dbReference>
<dbReference type="GO" id="GO:0075732">
    <property type="term" value="P:viral penetration into host nucleus"/>
    <property type="evidence" value="ECO:0007669"/>
    <property type="project" value="UniProtKB-UniRule"/>
</dbReference>
<dbReference type="HAMAP" id="MF_04070">
    <property type="entry name" value="INFV_NCAP"/>
    <property type="match status" value="1"/>
</dbReference>
<dbReference type="InterPro" id="IPR002141">
    <property type="entry name" value="Flu_NP"/>
</dbReference>
<dbReference type="Pfam" id="PF00506">
    <property type="entry name" value="Flu_NP"/>
    <property type="match status" value="1"/>
</dbReference>
<dbReference type="SUPFAM" id="SSF161003">
    <property type="entry name" value="flu NP-like"/>
    <property type="match status" value="1"/>
</dbReference>
<reference key="1">
    <citation type="journal article" date="1993" name="J. Virol.">
        <title>Analysis of the evolution and variation of the human influenza A virus nucleoprotein gene from 1933 to 1990.</title>
        <authorList>
            <person name="Shu L.L."/>
            <person name="Bean W.J."/>
            <person name="Webster R.G."/>
        </authorList>
    </citation>
    <scope>NUCLEOTIDE SEQUENCE [GENOMIC RNA]</scope>
</reference>
<reference key="2">
    <citation type="submission" date="2005-12" db="EMBL/GenBank/DDBJ databases">
        <title>The NIAID influenza genome sequencing project.</title>
        <authorList>
            <person name="Ghedin E."/>
            <person name="Spiro D."/>
            <person name="Miller N."/>
            <person name="Zaborsky J."/>
            <person name="Feldblyum T."/>
            <person name="Subbu V."/>
            <person name="Shumway M."/>
            <person name="Sparenborg J."/>
            <person name="Groveman L."/>
            <person name="Halpin R."/>
            <person name="Sitz J."/>
            <person name="Koo H."/>
            <person name="Salzberg S.L."/>
            <person name="Webster R.G."/>
            <person name="Hoffmann E."/>
            <person name="Krauss S."/>
            <person name="Naeve C."/>
            <person name="Bao Y."/>
            <person name="Bolotov P."/>
            <person name="Dernovoy D."/>
            <person name="Kiryutin B."/>
            <person name="Lipman D.J."/>
            <person name="Tatusova T."/>
        </authorList>
    </citation>
    <scope>NUCLEOTIDE SEQUENCE [GENOMIC RNA]</scope>
</reference>
<comment type="function">
    <text evidence="1">Encapsidates the negative strand viral RNA, protecting it from nucleases. The encapsidated genomic RNA is termed the ribonucleoprotein (RNP) and serves as template for transcription and replication. The RNP needs to be localized in the host nucleus to start an infectious cycle, but is too large to diffuse through the nuclear pore complex. NP comprises at least 2 nuclear localization signals that are responsible for the active RNP import into the nucleus through cellular importin alpha/beta pathway. Later in the infection, nclear export of RNPs are mediated through viral proteins NEP interacting with M1 which binds nucleoproteins. It is possible that nucleoprotein binds directly host exportin-1/XPO1 and plays an active role in RNPs nuclear export. M1 interaction with RNP seems to hide nucleoprotein's nuclear localization signals. Soon after a virion infects a new cell, M1 dissociates from the RNP under acidification of the virion driven by M2 protein. Dissociation of M1 from RNP unmasks nucleoprotein's nuclear localization signals, targeting the RNP to the nucleus.</text>
</comment>
<comment type="subunit">
    <text evidence="1">Homomultimerizes to form the nucleocapsid. May bind host exportin-1/XPO1. Binds to viral genomic RNA. Protein-RNA contacts are mediated by a combination of electrostatic interactions between positively charged residues and the phosphate backbone and planar interactions between aromatic side chains and bases.</text>
</comment>
<comment type="subcellular location">
    <subcellularLocation>
        <location evidence="1">Virion</location>
    </subcellularLocation>
    <subcellularLocation>
        <location evidence="1">Host nucleus</location>
    </subcellularLocation>
</comment>
<comment type="PTM">
    <text evidence="1">Late in virus-infected cells, may be cleaved from a 56-kDa protein to a 53-kDa protein by a cellular caspase. This cleavage might be a marker for the onset of apoptosis in infected cells or have a specific function in virus host interaction.</text>
</comment>
<comment type="similarity">
    <text evidence="1">Belongs to the influenza viruses nucleoprotein family.</text>
</comment>
<sequence>MASQGTKRSYEQMETDGERQNATEIRASVGKMIDGIGRFYIQMCTELKLSDYEGRLIQNSLTIERMVLSAFDERRNRYLEEHPSAGKDPKKTGGPIYKRVDGKWMRELVLYDKEEIRRIWRQANNGDDATAGLTHMMIWHSNLNDTTYQRTRALVRTGMDPRMCSLMQGSTLPRRSGAAGAAVKGIGTMVMELIRMIKRGINDRNFWRGENGRKTRSAYERMCNILKGKFQTAAQRAMMDQVRESRNPGNAEIEDLIFSARSALILRGSVAHKSCLPACVYGPAVASGYDFEKEGYSLVGIDPFKLLQNSQVYSLIRPNENPAHKSQLVWMACHSAAFEDLRLLSFIRGTKVSPRGKLSTRGVQIASNENMDTMESSTLELRSRYWAIRTRSGGNTNQQRASAGQISVQPTFSVQRNLPFDKSTIMAAFTGNTEGRTSDMRAEIIRMMEGAKPEEVSFRGRGVFELSDEKATNPIVPSFDMSNEGSYFFGDNAEEYDN</sequence>
<accession>Q08035</accession>
<accession>Q2VNC9</accession>
<protein>
    <recommendedName>
        <fullName evidence="1">Nucleoprotein</fullName>
    </recommendedName>
    <alternativeName>
        <fullName evidence="1">Nucleocapsid protein</fullName>
        <shortName evidence="1">Protein N</shortName>
    </alternativeName>
</protein>
<organism>
    <name type="scientific">Influenza A virus (strain A/Memphis/18/1978 H3N2)</name>
    <dbReference type="NCBI Taxonomy" id="383579"/>
    <lineage>
        <taxon>Viruses</taxon>
        <taxon>Riboviria</taxon>
        <taxon>Orthornavirae</taxon>
        <taxon>Negarnaviricota</taxon>
        <taxon>Polyploviricotina</taxon>
        <taxon>Insthoviricetes</taxon>
        <taxon>Articulavirales</taxon>
        <taxon>Orthomyxoviridae</taxon>
        <taxon>Alphainfluenzavirus</taxon>
        <taxon>Alphainfluenzavirus influenzae</taxon>
        <taxon>Influenza A virus</taxon>
    </lineage>
</organism>
<organismHost>
    <name type="scientific">Aves</name>
    <dbReference type="NCBI Taxonomy" id="8782"/>
</organismHost>
<organismHost>
    <name type="scientific">Cetacea</name>
    <name type="common">whales</name>
    <dbReference type="NCBI Taxonomy" id="9721"/>
</organismHost>
<organismHost>
    <name type="scientific">Homo sapiens</name>
    <name type="common">Human</name>
    <dbReference type="NCBI Taxonomy" id="9606"/>
</organismHost>
<organismHost>
    <name type="scientific">Phocidae</name>
    <name type="common">true seals</name>
    <dbReference type="NCBI Taxonomy" id="9709"/>
</organismHost>
<organismHost>
    <name type="scientific">Sus scrofa</name>
    <name type="common">Pig</name>
    <dbReference type="NCBI Taxonomy" id="9823"/>
</organismHost>
<feature type="chain" id="PRO_0000079085" description="Nucleoprotein">
    <location>
        <begin position="1"/>
        <end position="498"/>
    </location>
</feature>
<feature type="region of interest" description="Disordered" evidence="2">
    <location>
        <begin position="1"/>
        <end position="21"/>
    </location>
</feature>
<feature type="short sequence motif" description="Unconventional nuclear localization signal" evidence="1">
    <location>
        <begin position="1"/>
        <end position="18"/>
    </location>
</feature>
<feature type="short sequence motif" description="Bipartite nuclear localization signal" evidence="1">
    <location>
        <begin position="198"/>
        <end position="216"/>
    </location>
</feature>
<feature type="compositionally biased region" description="Basic and acidic residues" evidence="2">
    <location>
        <begin position="8"/>
        <end position="21"/>
    </location>
</feature>
<feature type="sequence conflict" description="In Ref. 1; AAA51504." ref="1">
    <original>A</original>
    <variation>R</variation>
    <location>
        <position position="131"/>
    </location>
</feature>
<feature type="sequence conflict" description="In Ref. 1; AAA51504." ref="1">
    <original>S</original>
    <variation>C</variation>
    <location>
        <position position="353"/>
    </location>
</feature>
<name>NCAP_I78A8</name>
<evidence type="ECO:0000255" key="1">
    <source>
        <dbReference type="HAMAP-Rule" id="MF_04070"/>
    </source>
</evidence>
<evidence type="ECO:0000256" key="2">
    <source>
        <dbReference type="SAM" id="MobiDB-lite"/>
    </source>
</evidence>
<keyword id="KW-0167">Capsid protein</keyword>
<keyword id="KW-1139">Helical capsid protein</keyword>
<keyword id="KW-1048">Host nucleus</keyword>
<keyword id="KW-0945">Host-virus interaction</keyword>
<keyword id="KW-0687">Ribonucleoprotein</keyword>
<keyword id="KW-0694">RNA-binding</keyword>
<keyword id="KW-0543">Viral nucleoprotein</keyword>
<keyword id="KW-1163">Viral penetration into host nucleus</keyword>
<keyword id="KW-0946">Virion</keyword>
<keyword id="KW-1160">Virus entry into host cell</keyword>